<keyword id="KW-0175">Coiled coil</keyword>
<keyword id="KW-0256">Endoplasmic reticulum</keyword>
<keyword id="KW-0342">GTP-binding</keyword>
<keyword id="KW-0378">Hydrolase</keyword>
<keyword id="KW-0472">Membrane</keyword>
<keyword id="KW-0547">Nucleotide-binding</keyword>
<keyword id="KW-1185">Reference proteome</keyword>
<keyword id="KW-0812">Transmembrane</keyword>
<keyword id="KW-1133">Transmembrane helix</keyword>
<comment type="function">
    <text evidence="1">Cooperates with the reticulon proteins and tubule-shaping DP1 family proteins to generate and maintain the structure of the tubular endoplasmic reticulum network. Has GTPase activity, which is required for its function in ER organization.</text>
</comment>
<comment type="subcellular location">
    <subcellularLocation>
        <location evidence="1">Endoplasmic reticulum membrane</location>
        <topology evidence="1">Multi-pass membrane protein</topology>
    </subcellularLocation>
    <text evidence="1">Enriched in the cortical ER. Concentrated in punctae along the ER tubules.</text>
</comment>
<comment type="similarity">
    <text evidence="2">Belongs to the TRAFAC class dynamin-like GTPase superfamily. GB1/RHD3 GTPase family. RHD3 subfamily.</text>
</comment>
<comment type="sequence caution" evidence="4">
    <conflict type="erroneous gene model prediction">
        <sequence resource="EMBL-CDS" id="EEA23218"/>
    </conflict>
</comment>
<name>SEY1_TALMQ</name>
<dbReference type="EC" id="3.6.5.-" evidence="1"/>
<dbReference type="EMBL" id="DS995902">
    <property type="protein sequence ID" value="EEA23218.1"/>
    <property type="status" value="ALT_SEQ"/>
    <property type="molecule type" value="Genomic_DNA"/>
</dbReference>
<dbReference type="RefSeq" id="XP_002149385.1">
    <property type="nucleotide sequence ID" value="XM_002149349.1"/>
</dbReference>
<dbReference type="SMR" id="B6QIM3"/>
<dbReference type="STRING" id="441960.B6QIM3"/>
<dbReference type="HOGENOM" id="CLU_260035_0_0_1"/>
<dbReference type="OrthoDB" id="1436at28568"/>
<dbReference type="Proteomes" id="UP000001294">
    <property type="component" value="Unassembled WGS sequence"/>
</dbReference>
<dbReference type="GO" id="GO:0005789">
    <property type="term" value="C:endoplasmic reticulum membrane"/>
    <property type="evidence" value="ECO:0007669"/>
    <property type="project" value="UniProtKB-SubCell"/>
</dbReference>
<dbReference type="GO" id="GO:0005525">
    <property type="term" value="F:GTP binding"/>
    <property type="evidence" value="ECO:0007669"/>
    <property type="project" value="UniProtKB-UniRule"/>
</dbReference>
<dbReference type="GO" id="GO:0003924">
    <property type="term" value="F:GTPase activity"/>
    <property type="evidence" value="ECO:0007669"/>
    <property type="project" value="UniProtKB-UniRule"/>
</dbReference>
<dbReference type="GO" id="GO:0016320">
    <property type="term" value="P:endoplasmic reticulum membrane fusion"/>
    <property type="evidence" value="ECO:0007669"/>
    <property type="project" value="TreeGrafter"/>
</dbReference>
<dbReference type="CDD" id="cd01851">
    <property type="entry name" value="GBP"/>
    <property type="match status" value="1"/>
</dbReference>
<dbReference type="FunFam" id="3.40.50.300:FF:000727">
    <property type="entry name" value="Protein SEY1 homolog"/>
    <property type="match status" value="1"/>
</dbReference>
<dbReference type="Gene3D" id="3.40.50.300">
    <property type="entry name" value="P-loop containing nucleotide triphosphate hydrolases"/>
    <property type="match status" value="1"/>
</dbReference>
<dbReference type="HAMAP" id="MF_03109">
    <property type="entry name" value="Sey1"/>
    <property type="match status" value="1"/>
</dbReference>
<dbReference type="InterPro" id="IPR030386">
    <property type="entry name" value="G_GB1_RHD3_dom"/>
</dbReference>
<dbReference type="InterPro" id="IPR027417">
    <property type="entry name" value="P-loop_NTPase"/>
</dbReference>
<dbReference type="InterPro" id="IPR008803">
    <property type="entry name" value="RHD3/Sey1"/>
</dbReference>
<dbReference type="InterPro" id="IPR046758">
    <property type="entry name" value="Sey1/RHD3-like_3HB"/>
</dbReference>
<dbReference type="PANTHER" id="PTHR45923">
    <property type="entry name" value="PROTEIN SEY1"/>
    <property type="match status" value="1"/>
</dbReference>
<dbReference type="PANTHER" id="PTHR45923:SF2">
    <property type="entry name" value="PROTEIN SEY1"/>
    <property type="match status" value="1"/>
</dbReference>
<dbReference type="Pfam" id="PF05879">
    <property type="entry name" value="RHD3_GTPase"/>
    <property type="match status" value="1"/>
</dbReference>
<dbReference type="Pfam" id="PF20428">
    <property type="entry name" value="Sey1_3HB"/>
    <property type="match status" value="1"/>
</dbReference>
<dbReference type="SUPFAM" id="SSF52540">
    <property type="entry name" value="P-loop containing nucleoside triphosphate hydrolases"/>
    <property type="match status" value="1"/>
</dbReference>
<dbReference type="PROSITE" id="PS51715">
    <property type="entry name" value="G_GB1_RHD3"/>
    <property type="match status" value="1"/>
</dbReference>
<sequence>MVDQRPRAGSRSFTAPSLIGTNGHFASVGDAAHDPKAYEHGVQVIDEEKEFNPNLSKYLSLEDVTNAGFNYHLISVFGSQSTGKSTLLNHLFGTQFSVMSDKERRQTTKGIWMSKNKTKHEDPNARMADNILVMDVEGTDGRERGEDQDFERKSALFALATSEVLIVNIWEHQVGLYQGANMGLLKTVFEVNLQLFLKDKNTTHRSLLFFVIRDFMGNTPLKNLETTLLEDLSRIWASLSKPQGLERSTIHDYFDFAFYGLPHKGYKPDEFAAEAKKLGSRFREGRRDRKEQLMGASIENGVFLPEYHRRIPADGFAHYANGIWDQIVNNKDLDLPTQQELLAQFRCDEISREVIAAFDEAIAPFEEKQAAGVRAGELVILGGLGAAMRGARVKAVKNFETEASRYHKGVYQRKRAELEGKIDTRLKALFQGQLNAAHKSGVKDFSDAVSNAVKAGQKKGASYDFAEIVKQETKAALERYEKEARASLVEGTSWSNYKQELKLYQKDLAEVSGQLRRDEMRRLATRVERWVRSRLSDSVSLEFNSLGSGRGGSGAPETGEKPSESKIWDRIWNLFVETVLDAERRFTDRATSFDASVDEVDVGLWRLRRKSWGVLRLKVEEEMMEGNLLLKLRENFEDKFRYDEAGVPRIWRPTDDIEGIYTRARESTLTLIPLLSKFHLAENNAPPPLDRWVGHTPSSATAADEEDLTPIGGVDEEDGKSLEEEVTILNDAKRQDLTVRFKKAADGVYVEAKRSAIGGITQVPLYFYGLLLALGWNEIWAVLRNPAYFFLLFVCAIGAYVTYQLNLWGPILKMADAASRQALEELKKKLREFLEASDTGRQAMAMSSGEEYEMSSLNRGGKRVEDEDENDDI</sequence>
<gene>
    <name type="primary">sey1</name>
    <name type="ORF">PMAA_098060</name>
</gene>
<accession>B6QIM3</accession>
<reference key="1">
    <citation type="journal article" date="2015" name="Genome Announc.">
        <title>Genome sequence of the AIDS-associated pathogen Penicillium marneffei (ATCC18224) and its near taxonomic relative Talaromyces stipitatus (ATCC10500).</title>
        <authorList>
            <person name="Nierman W.C."/>
            <person name="Fedorova-Abrams N.D."/>
            <person name="Andrianopoulos A."/>
        </authorList>
    </citation>
    <scope>NUCLEOTIDE SEQUENCE [LARGE SCALE GENOMIC DNA]</scope>
    <source>
        <strain>ATCC 18224 / CBS 334.59 / QM 7333</strain>
    </source>
</reference>
<organism>
    <name type="scientific">Talaromyces marneffei (strain ATCC 18224 / CBS 334.59 / QM 7333)</name>
    <name type="common">Penicillium marneffei</name>
    <dbReference type="NCBI Taxonomy" id="441960"/>
    <lineage>
        <taxon>Eukaryota</taxon>
        <taxon>Fungi</taxon>
        <taxon>Dikarya</taxon>
        <taxon>Ascomycota</taxon>
        <taxon>Pezizomycotina</taxon>
        <taxon>Eurotiomycetes</taxon>
        <taxon>Eurotiomycetidae</taxon>
        <taxon>Eurotiales</taxon>
        <taxon>Trichocomaceae</taxon>
        <taxon>Talaromyces</taxon>
        <taxon>Talaromyces sect. Talaromyces</taxon>
    </lineage>
</organism>
<feature type="chain" id="PRO_0000384993" description="Protein sey1">
    <location>
        <begin position="1"/>
        <end position="873"/>
    </location>
</feature>
<feature type="topological domain" description="Cytoplasmic" evidence="1">
    <location>
        <begin position="1"/>
        <end position="762"/>
    </location>
</feature>
<feature type="transmembrane region" description="Helical" evidence="1">
    <location>
        <begin position="763"/>
        <end position="783"/>
    </location>
</feature>
<feature type="topological domain" description="Lumenal" evidence="1">
    <location>
        <begin position="784"/>
        <end position="786"/>
    </location>
</feature>
<feature type="transmembrane region" description="Helical" evidence="1">
    <location>
        <begin position="787"/>
        <end position="807"/>
    </location>
</feature>
<feature type="topological domain" description="Cytoplasmic" evidence="1">
    <location>
        <begin position="808"/>
        <end position="873"/>
    </location>
</feature>
<feature type="domain" description="GB1/RHD3-type G" evidence="2">
    <location>
        <begin position="68"/>
        <end position="320"/>
    </location>
</feature>
<feature type="region of interest" description="Disordered" evidence="3">
    <location>
        <begin position="691"/>
        <end position="716"/>
    </location>
</feature>
<feature type="region of interest" description="Disordered" evidence="3">
    <location>
        <begin position="839"/>
        <end position="873"/>
    </location>
</feature>
<feature type="coiled-coil region" evidence="1">
    <location>
        <begin position="462"/>
        <end position="519"/>
    </location>
</feature>
<feature type="coiled-coil region" evidence="1">
    <location>
        <begin position="812"/>
        <end position="839"/>
    </location>
</feature>
<feature type="compositionally biased region" description="Acidic residues" evidence="3">
    <location>
        <begin position="703"/>
        <end position="716"/>
    </location>
</feature>
<feature type="binding site" evidence="1">
    <location>
        <begin position="78"/>
        <end position="85"/>
    </location>
    <ligand>
        <name>GTP</name>
        <dbReference type="ChEBI" id="CHEBI:37565"/>
    </ligand>
</feature>
<evidence type="ECO:0000255" key="1">
    <source>
        <dbReference type="HAMAP-Rule" id="MF_03109"/>
    </source>
</evidence>
<evidence type="ECO:0000255" key="2">
    <source>
        <dbReference type="PROSITE-ProRule" id="PRU01052"/>
    </source>
</evidence>
<evidence type="ECO:0000256" key="3">
    <source>
        <dbReference type="SAM" id="MobiDB-lite"/>
    </source>
</evidence>
<evidence type="ECO:0000305" key="4"/>
<protein>
    <recommendedName>
        <fullName evidence="1">Protein sey1</fullName>
        <ecNumber evidence="1">3.6.5.-</ecNumber>
    </recommendedName>
</protein>
<proteinExistence type="inferred from homology"/>